<feature type="chain" id="PRO_0000185792" description="Glutathione S-transferase alpha-1">
    <location>
        <begin position="1"/>
        <end position="222"/>
    </location>
</feature>
<feature type="domain" description="GST N-terminal">
    <location>
        <begin position="3"/>
        <end position="83"/>
    </location>
</feature>
<feature type="domain" description="GST C-terminal">
    <location>
        <begin position="85"/>
        <end position="208"/>
    </location>
</feature>
<feature type="binding site" evidence="4">
    <location>
        <position position="9"/>
    </location>
    <ligand>
        <name>glutathione</name>
        <dbReference type="ChEBI" id="CHEBI:57925"/>
    </ligand>
</feature>
<feature type="binding site" evidence="4">
    <location>
        <position position="45"/>
    </location>
    <ligand>
        <name>glutathione</name>
        <dbReference type="ChEBI" id="CHEBI:57925"/>
    </ligand>
</feature>
<feature type="binding site" evidence="4">
    <location>
        <begin position="54"/>
        <end position="55"/>
    </location>
    <ligand>
        <name>glutathione</name>
        <dbReference type="ChEBI" id="CHEBI:57925"/>
    </ligand>
</feature>
<feature type="binding site" evidence="4">
    <location>
        <begin position="67"/>
        <end position="68"/>
    </location>
    <ligand>
        <name>glutathione</name>
        <dbReference type="ChEBI" id="CHEBI:57925"/>
    </ligand>
</feature>
<feature type="modified residue" description="N-acetylmethionine" evidence="3">
    <location>
        <position position="1"/>
    </location>
</feature>
<feature type="modified residue" description="N6-succinyllysine" evidence="2">
    <location>
        <position position="4"/>
    </location>
</feature>
<feature type="sequence conflict" description="In Ref. 1 and 3." evidence="5" ref="1 3">
    <original>R</original>
    <variation>K</variation>
    <location>
        <position position="152"/>
    </location>
</feature>
<feature type="sequence conflict" description="In Ref. 1; AAA41283." evidence="5" ref="1">
    <original>V</original>
    <variation>M</variation>
    <location>
        <position position="208"/>
    </location>
</feature>
<feature type="strand" evidence="7">
    <location>
        <begin position="6"/>
        <end position="12"/>
    </location>
</feature>
<feature type="helix" evidence="7">
    <location>
        <begin position="16"/>
        <end position="25"/>
    </location>
</feature>
<feature type="strand" evidence="7">
    <location>
        <begin position="31"/>
        <end position="35"/>
    </location>
</feature>
<feature type="helix" evidence="7">
    <location>
        <begin position="38"/>
        <end position="46"/>
    </location>
</feature>
<feature type="strand" evidence="7">
    <location>
        <begin position="57"/>
        <end position="60"/>
    </location>
</feature>
<feature type="strand" evidence="7">
    <location>
        <begin position="63"/>
        <end position="67"/>
    </location>
</feature>
<feature type="helix" evidence="7">
    <location>
        <begin position="68"/>
        <end position="79"/>
    </location>
</feature>
<feature type="helix" evidence="7">
    <location>
        <begin position="86"/>
        <end position="109"/>
    </location>
</feature>
<feature type="helix" evidence="7">
    <location>
        <begin position="114"/>
        <end position="116"/>
    </location>
</feature>
<feature type="helix" evidence="7">
    <location>
        <begin position="117"/>
        <end position="130"/>
    </location>
</feature>
<feature type="helix" evidence="7">
    <location>
        <begin position="132"/>
        <end position="143"/>
    </location>
</feature>
<feature type="strand" evidence="7">
    <location>
        <begin position="146"/>
        <end position="149"/>
    </location>
</feature>
<feature type="helix" evidence="7">
    <location>
        <begin position="155"/>
        <end position="171"/>
    </location>
</feature>
<feature type="helix" evidence="7">
    <location>
        <begin position="172"/>
        <end position="175"/>
    </location>
</feature>
<feature type="helix" evidence="7">
    <location>
        <begin position="179"/>
        <end position="190"/>
    </location>
</feature>
<feature type="helix" evidence="7">
    <location>
        <begin position="192"/>
        <end position="198"/>
    </location>
</feature>
<feature type="helix" evidence="7">
    <location>
        <begin position="211"/>
        <end position="219"/>
    </location>
</feature>
<evidence type="ECO:0000250" key="1">
    <source>
        <dbReference type="UniProtKB" id="P08263"/>
    </source>
</evidence>
<evidence type="ECO:0000250" key="2">
    <source>
        <dbReference type="UniProtKB" id="P30115"/>
    </source>
</evidence>
<evidence type="ECO:0000250" key="3">
    <source>
        <dbReference type="UniProtKB" id="P80894"/>
    </source>
</evidence>
<evidence type="ECO:0000269" key="4">
    <source>
    </source>
</evidence>
<evidence type="ECO:0000305" key="5"/>
<evidence type="ECO:0000305" key="6">
    <source>
    </source>
</evidence>
<evidence type="ECO:0007829" key="7">
    <source>
        <dbReference type="PDB" id="1EV4"/>
    </source>
</evidence>
<protein>
    <recommendedName>
        <fullName evidence="5">Glutathione S-transferase alpha-1</fullName>
        <ecNumber evidence="4">2.5.1.18</ecNumber>
    </recommendedName>
    <alternativeName>
        <fullName evidence="1">13-hydroperoxyoctadecadienoate peroxidase</fullName>
        <ecNumber evidence="1">1.11.1.-</ecNumber>
    </alternativeName>
    <alternativeName>
        <fullName evidence="1">Androst-5-ene-3,17-dione isomerase</fullName>
        <ecNumber evidence="1">5.3.3.-</ecNumber>
    </alternativeName>
    <alternativeName>
        <fullName>GST 1-1</fullName>
    </alternativeName>
    <alternativeName>
        <fullName>GST 1a-1a</fullName>
    </alternativeName>
    <alternativeName>
        <fullName>GST A1-1</fullName>
    </alternativeName>
    <alternativeName>
        <fullName>GST B</fullName>
    </alternativeName>
    <alternativeName>
        <fullName>Glutathione S-transferase Ya-1</fullName>
        <shortName>GST Ya1</shortName>
    </alternativeName>
    <alternativeName>
        <fullName>Ligandin</fullName>
    </alternativeName>
</protein>
<accession>P00502</accession>
<accession>Q6AZ72</accession>
<name>GSTA1_RAT</name>
<dbReference type="EC" id="2.5.1.18" evidence="4"/>
<dbReference type="EC" id="1.11.1.-" evidence="1"/>
<dbReference type="EC" id="5.3.3.-" evidence="1"/>
<dbReference type="EMBL" id="K01931">
    <property type="protein sequence ID" value="AAA41283.1"/>
    <property type="molecule type" value="mRNA"/>
</dbReference>
<dbReference type="EMBL" id="BC078706">
    <property type="protein sequence ID" value="AAH78706.1"/>
    <property type="molecule type" value="mRNA"/>
</dbReference>
<dbReference type="PIR" id="A24735">
    <property type="entry name" value="A24735"/>
</dbReference>
<dbReference type="PIR" id="A92479">
    <property type="entry name" value="XURTG"/>
</dbReference>
<dbReference type="RefSeq" id="NP_058709.2">
    <property type="nucleotide sequence ID" value="NM_017013.4"/>
</dbReference>
<dbReference type="PDB" id="1EV4">
    <property type="method" value="X-ray"/>
    <property type="resolution" value="2.20 A"/>
    <property type="chains" value="A/C/D=2-222"/>
</dbReference>
<dbReference type="PDB" id="1EV9">
    <property type="method" value="X-ray"/>
    <property type="resolution" value="2.20 A"/>
    <property type="chains" value="A/C/D=2-222"/>
</dbReference>
<dbReference type="PDBsum" id="1EV4"/>
<dbReference type="PDBsum" id="1EV9"/>
<dbReference type="SMR" id="P00502"/>
<dbReference type="FunCoup" id="P00502">
    <property type="interactions" value="158"/>
</dbReference>
<dbReference type="IntAct" id="P00502">
    <property type="interactions" value="1"/>
</dbReference>
<dbReference type="ChEMBL" id="CHEMBL2390"/>
<dbReference type="iPTMnet" id="P00502"/>
<dbReference type="PhosphoSitePlus" id="P00502"/>
<dbReference type="Ensembl" id="ENSRNOT00000032185.6">
    <property type="protein sequence ID" value="ENSRNOP00000037786.6"/>
    <property type="gene ID" value="ENSRNOG00000029861.6"/>
</dbReference>
<dbReference type="GeneID" id="24422"/>
<dbReference type="KEGG" id="rno:24422"/>
<dbReference type="AGR" id="RGD:2754"/>
<dbReference type="CTD" id="2939"/>
<dbReference type="RGD" id="2753">
    <property type="gene designation" value="Gsta1"/>
</dbReference>
<dbReference type="GeneTree" id="ENSGT00940000154526"/>
<dbReference type="InParanoid" id="P00502"/>
<dbReference type="OMA" id="LVELFYY"/>
<dbReference type="OrthoDB" id="414243at2759"/>
<dbReference type="PhylomeDB" id="P00502"/>
<dbReference type="TreeFam" id="TF105321"/>
<dbReference type="Reactome" id="R-RNO-156590">
    <property type="pathway name" value="Glutathione conjugation"/>
</dbReference>
<dbReference type="Reactome" id="R-RNO-189483">
    <property type="pathway name" value="Heme degradation"/>
</dbReference>
<dbReference type="Reactome" id="R-RNO-9748787">
    <property type="pathway name" value="Azathioprine ADME"/>
</dbReference>
<dbReference type="EvolutionaryTrace" id="P00502"/>
<dbReference type="PRO" id="PR:P00502"/>
<dbReference type="Proteomes" id="UP000002494">
    <property type="component" value="Chromosome 8"/>
</dbReference>
<dbReference type="GO" id="GO:0005829">
    <property type="term" value="C:cytosol"/>
    <property type="evidence" value="ECO:0000314"/>
    <property type="project" value="CAFA"/>
</dbReference>
<dbReference type="GO" id="GO:0035731">
    <property type="term" value="F:dinitrosyl-iron complex binding"/>
    <property type="evidence" value="ECO:0000314"/>
    <property type="project" value="RGD"/>
</dbReference>
<dbReference type="GO" id="GO:0005504">
    <property type="term" value="F:fatty acid binding"/>
    <property type="evidence" value="ECO:0000266"/>
    <property type="project" value="RGD"/>
</dbReference>
<dbReference type="GO" id="GO:0043295">
    <property type="term" value="F:glutathione binding"/>
    <property type="evidence" value="ECO:0000314"/>
    <property type="project" value="CAFA"/>
</dbReference>
<dbReference type="GO" id="GO:0004602">
    <property type="term" value="F:glutathione peroxidase activity"/>
    <property type="evidence" value="ECO:0000266"/>
    <property type="project" value="RGD"/>
</dbReference>
<dbReference type="GO" id="GO:0004364">
    <property type="term" value="F:glutathione transferase activity"/>
    <property type="evidence" value="ECO:0000314"/>
    <property type="project" value="CAFA"/>
</dbReference>
<dbReference type="GO" id="GO:0042803">
    <property type="term" value="F:protein homodimerization activity"/>
    <property type="evidence" value="ECO:0000314"/>
    <property type="project" value="CAFA"/>
</dbReference>
<dbReference type="GO" id="GO:0004769">
    <property type="term" value="F:steroid Delta-isomerase activity"/>
    <property type="evidence" value="ECO:0000250"/>
    <property type="project" value="UniProtKB"/>
</dbReference>
<dbReference type="GO" id="GO:0030855">
    <property type="term" value="P:epithelial cell differentiation"/>
    <property type="evidence" value="ECO:0000266"/>
    <property type="project" value="RGD"/>
</dbReference>
<dbReference type="GO" id="GO:1901687">
    <property type="term" value="P:glutathione derivative biosynthetic process"/>
    <property type="evidence" value="ECO:0000250"/>
    <property type="project" value="UniProtKB"/>
</dbReference>
<dbReference type="GO" id="GO:0006749">
    <property type="term" value="P:glutathione metabolic process"/>
    <property type="evidence" value="ECO:0000266"/>
    <property type="project" value="RGD"/>
</dbReference>
<dbReference type="GO" id="GO:0043651">
    <property type="term" value="P:linoleic acid metabolic process"/>
    <property type="evidence" value="ECO:0000266"/>
    <property type="project" value="RGD"/>
</dbReference>
<dbReference type="GO" id="GO:0006693">
    <property type="term" value="P:prostaglandin metabolic process"/>
    <property type="evidence" value="ECO:0000250"/>
    <property type="project" value="UniProtKB"/>
</dbReference>
<dbReference type="GO" id="GO:0031667">
    <property type="term" value="P:response to nutrient levels"/>
    <property type="evidence" value="ECO:0000270"/>
    <property type="project" value="RGD"/>
</dbReference>
<dbReference type="GO" id="GO:0009410">
    <property type="term" value="P:response to xenobiotic stimulus"/>
    <property type="evidence" value="ECO:0000303"/>
    <property type="project" value="RGD"/>
</dbReference>
<dbReference type="GO" id="GO:0042178">
    <property type="term" value="P:xenobiotic catabolic process"/>
    <property type="evidence" value="ECO:0000314"/>
    <property type="project" value="CAFA"/>
</dbReference>
<dbReference type="GO" id="GO:0006805">
    <property type="term" value="P:xenobiotic metabolic process"/>
    <property type="evidence" value="ECO:0000318"/>
    <property type="project" value="GO_Central"/>
</dbReference>
<dbReference type="CDD" id="cd03208">
    <property type="entry name" value="GST_C_Alpha"/>
    <property type="match status" value="1"/>
</dbReference>
<dbReference type="CDD" id="cd03077">
    <property type="entry name" value="GST_N_Alpha"/>
    <property type="match status" value="1"/>
</dbReference>
<dbReference type="FunFam" id="1.20.1050.10:FF:000005">
    <property type="entry name" value="Glutathione S-transferase A1"/>
    <property type="match status" value="1"/>
</dbReference>
<dbReference type="Gene3D" id="1.20.1050.10">
    <property type="match status" value="1"/>
</dbReference>
<dbReference type="Gene3D" id="3.40.30.10">
    <property type="entry name" value="Glutaredoxin"/>
    <property type="match status" value="1"/>
</dbReference>
<dbReference type="InterPro" id="IPR010987">
    <property type="entry name" value="Glutathione-S-Trfase_C-like"/>
</dbReference>
<dbReference type="InterPro" id="IPR036282">
    <property type="entry name" value="Glutathione-S-Trfase_C_sf"/>
</dbReference>
<dbReference type="InterPro" id="IPR004045">
    <property type="entry name" value="Glutathione_S-Trfase_N"/>
</dbReference>
<dbReference type="InterPro" id="IPR003080">
    <property type="entry name" value="GST_alpha"/>
</dbReference>
<dbReference type="InterPro" id="IPR004046">
    <property type="entry name" value="GST_C"/>
</dbReference>
<dbReference type="InterPro" id="IPR050213">
    <property type="entry name" value="GST_superfamily"/>
</dbReference>
<dbReference type="InterPro" id="IPR036249">
    <property type="entry name" value="Thioredoxin-like_sf"/>
</dbReference>
<dbReference type="PANTHER" id="PTHR11571">
    <property type="entry name" value="GLUTATHIONE S-TRANSFERASE"/>
    <property type="match status" value="1"/>
</dbReference>
<dbReference type="PANTHER" id="PTHR11571:SF233">
    <property type="entry name" value="GLUTATHIONE S-TRANSFERASE-RELATED"/>
    <property type="match status" value="1"/>
</dbReference>
<dbReference type="Pfam" id="PF00043">
    <property type="entry name" value="GST_C"/>
    <property type="match status" value="1"/>
</dbReference>
<dbReference type="Pfam" id="PF02798">
    <property type="entry name" value="GST_N"/>
    <property type="match status" value="1"/>
</dbReference>
<dbReference type="PRINTS" id="PR01266">
    <property type="entry name" value="GSTRNSFRASEA"/>
</dbReference>
<dbReference type="SFLD" id="SFLDG01205">
    <property type="entry name" value="AMPS.1"/>
    <property type="match status" value="1"/>
</dbReference>
<dbReference type="SFLD" id="SFLDG00363">
    <property type="entry name" value="AMPS_(cytGST):_Alpha-__Mu-__Pi"/>
    <property type="match status" value="1"/>
</dbReference>
<dbReference type="SUPFAM" id="SSF47616">
    <property type="entry name" value="GST C-terminal domain-like"/>
    <property type="match status" value="1"/>
</dbReference>
<dbReference type="SUPFAM" id="SSF52833">
    <property type="entry name" value="Thioredoxin-like"/>
    <property type="match status" value="1"/>
</dbReference>
<dbReference type="PROSITE" id="PS50405">
    <property type="entry name" value="GST_CTER"/>
    <property type="match status" value="1"/>
</dbReference>
<dbReference type="PROSITE" id="PS50404">
    <property type="entry name" value="GST_NTER"/>
    <property type="match status" value="1"/>
</dbReference>
<organism>
    <name type="scientific">Rattus norvegicus</name>
    <name type="common">Rat</name>
    <dbReference type="NCBI Taxonomy" id="10116"/>
    <lineage>
        <taxon>Eukaryota</taxon>
        <taxon>Metazoa</taxon>
        <taxon>Chordata</taxon>
        <taxon>Craniata</taxon>
        <taxon>Vertebrata</taxon>
        <taxon>Euteleostomi</taxon>
        <taxon>Mammalia</taxon>
        <taxon>Eutheria</taxon>
        <taxon>Euarchontoglires</taxon>
        <taxon>Glires</taxon>
        <taxon>Rodentia</taxon>
        <taxon>Myomorpha</taxon>
        <taxon>Muroidea</taxon>
        <taxon>Muridae</taxon>
        <taxon>Murinae</taxon>
        <taxon>Rattus</taxon>
    </lineage>
</organism>
<sequence length="222" mass="25607">MSGKPVLHYFNARGRMECIRWLLAAAGVEFDEKFIQSPEDLEKLKKDGNLMFDQVPMVEIDGMKLAQTRAILNYIATKYDLYGKDMKERALIDMYTEGILDLTEMIMQLVICPPDQKEAKTALAKDRTKNRYLPAFEKVLKSHGQDYLVGNRLTRVDIHLLELLLYVEEFDASLLTSFPLLKAFKSRISSLPNVKKFLQPGSQRKLPVDAKQIEEARKIFKF</sequence>
<comment type="function">
    <text evidence="1 6">Glutathione S-transferase that catalyzes the nucleophilic attack of the sulfur atom of glutathione on the electrophilic groups of a wide range of exogenous and endogenous compounds (Probable). Involved in the formation of glutathione conjugates of both prostaglandin A2 (PGA2) and prostaglandin J2 (PGJ2). It also catalyzes the isomerization of D5-androstene-3,17-dione (AD) into D4-androstene-3,17-dione and may therefore play an important role in hormone biosynthesis. Through its glutathione-dependent peroxidase activity toward the fatty acid hydroperoxide (13S)-hydroperoxy-(9Z,11E)-octadecadienoate/13-HPODE it is also involved in the metabolism of oxidized linoleic acid (By similarity).</text>
</comment>
<comment type="catalytic activity">
    <reaction evidence="4">
        <text>RX + glutathione = an S-substituted glutathione + a halide anion + H(+)</text>
        <dbReference type="Rhea" id="RHEA:16437"/>
        <dbReference type="ChEBI" id="CHEBI:15378"/>
        <dbReference type="ChEBI" id="CHEBI:16042"/>
        <dbReference type="ChEBI" id="CHEBI:17792"/>
        <dbReference type="ChEBI" id="CHEBI:57925"/>
        <dbReference type="ChEBI" id="CHEBI:90779"/>
        <dbReference type="EC" id="2.5.1.18"/>
    </reaction>
    <physiologicalReaction direction="left-to-right" evidence="6">
        <dbReference type="Rhea" id="RHEA:16438"/>
    </physiologicalReaction>
</comment>
<comment type="catalytic activity">
    <reaction evidence="1">
        <text>prostaglandin A2 + glutathione = prostaglandin A2-S-(R)-glutathione</text>
        <dbReference type="Rhea" id="RHEA:50796"/>
        <dbReference type="ChEBI" id="CHEBI:57925"/>
        <dbReference type="ChEBI" id="CHEBI:133370"/>
        <dbReference type="ChEBI" id="CHEBI:133768"/>
    </reaction>
    <physiologicalReaction direction="left-to-right" evidence="1">
        <dbReference type="Rhea" id="RHEA:50797"/>
    </physiologicalReaction>
</comment>
<comment type="catalytic activity">
    <reaction evidence="1">
        <text>prostaglandin J2 + glutathione = prostaglandin J2-S-(R)-glutathione</text>
        <dbReference type="Rhea" id="RHEA:50804"/>
        <dbReference type="ChEBI" id="CHEBI:57925"/>
        <dbReference type="ChEBI" id="CHEBI:133396"/>
        <dbReference type="ChEBI" id="CHEBI:133771"/>
    </reaction>
    <physiologicalReaction direction="left-to-right" evidence="1">
        <dbReference type="Rhea" id="RHEA:50805"/>
    </physiologicalReaction>
</comment>
<comment type="catalytic activity">
    <reaction evidence="1">
        <text>(13S)-hydroperoxy-(9Z,11E)-octadecadienoate + 2 glutathione = (13S)-hydroxy-(9Z,11E)-octadecadienoate + glutathione disulfide + H2O</text>
        <dbReference type="Rhea" id="RHEA:48888"/>
        <dbReference type="ChEBI" id="CHEBI:15377"/>
        <dbReference type="ChEBI" id="CHEBI:57466"/>
        <dbReference type="ChEBI" id="CHEBI:57925"/>
        <dbReference type="ChEBI" id="CHEBI:58297"/>
        <dbReference type="ChEBI" id="CHEBI:90850"/>
    </reaction>
    <physiologicalReaction direction="left-to-right" evidence="1">
        <dbReference type="Rhea" id="RHEA:48889"/>
    </physiologicalReaction>
</comment>
<comment type="catalytic activity">
    <reaction evidence="1">
        <text>androst-5-ene-3,17-dione = androst-4-ene-3,17-dione</text>
        <dbReference type="Rhea" id="RHEA:43936"/>
        <dbReference type="ChEBI" id="CHEBI:16422"/>
        <dbReference type="ChEBI" id="CHEBI:83865"/>
    </reaction>
    <physiologicalReaction direction="left-to-right" evidence="1">
        <dbReference type="Rhea" id="RHEA:43937"/>
    </physiologicalReaction>
</comment>
<comment type="subunit">
    <text evidence="1 4">Homodimer (PubMed:11119643). Homodimer or heterodimer of GSTA1 and GSTA2 (By similarity).</text>
</comment>
<comment type="subcellular location">
    <subcellularLocation>
        <location>Cytoplasm</location>
    </subcellularLocation>
</comment>
<comment type="miscellaneous">
    <text>In addition to its enzymatic activity, the homodimer of Ya chains, called ligandin, binds various organic anions, xenobiotics, and azocarcinogen dyes.</text>
</comment>
<comment type="similarity">
    <text evidence="5">Belongs to the GST superfamily. Alpha family.</text>
</comment>
<gene>
    <name type="primary">Gsta1</name>
</gene>
<proteinExistence type="evidence at protein level"/>
<reference key="1">
    <citation type="journal article" date="1984" name="J. Biol. Chem.">
        <title>The nucleotide sequence of a rat liver glutathione S-transferase subunit cDNA clone.</title>
        <authorList>
            <person name="Lai H.-C.J."/>
            <person name="Li N.-Q."/>
            <person name="Weiss M.J."/>
            <person name="Reddy C.C."/>
            <person name="Tu C.-P.D."/>
        </authorList>
    </citation>
    <scope>NUCLEOTIDE SEQUENCE [MRNA]</scope>
    <source>
        <strain>Sprague-Dawley</strain>
        <tissue>Liver</tissue>
    </source>
</reference>
<reference key="2">
    <citation type="journal article" date="2004" name="Genome Res.">
        <title>The status, quality, and expansion of the NIH full-length cDNA project: the Mammalian Gene Collection (MGC).</title>
        <authorList>
            <consortium name="The MGC Project Team"/>
        </authorList>
    </citation>
    <scope>NUCLEOTIDE SEQUENCE [LARGE SCALE MRNA]</scope>
    <source>
        <tissue>Kidney</tissue>
    </source>
</reference>
<reference key="3">
    <citation type="journal article" date="1982" name="J. Biol. Chem.">
        <title>Rat glutathione S-transferase. Cloning of double-stranded cDNA and induction of its mRNA.</title>
        <authorList>
            <person name="Kalinyak J.E."/>
            <person name="Taylor J.M."/>
        </authorList>
    </citation>
    <scope>NUCLEOTIDE SEQUENCE [MRNA] OF 46-197</scope>
</reference>
<reference key="4">
    <citation type="journal article" date="2001" name="Proteins">
        <title>Localization of the C-terminus of rat glutathione S-transferase A1-1: crystal structure of mutants W21F and W21F/F220Y.</title>
        <authorList>
            <person name="Adman E.T."/>
            <person name="Le Trong I."/>
            <person name="Stenkamp R.E."/>
            <person name="Nieslanik B.S."/>
            <person name="Dietze E.C."/>
            <person name="Tai G."/>
            <person name="Ibarra C."/>
            <person name="Atkins W.M."/>
        </authorList>
    </citation>
    <scope>X-RAY CRYSTALLOGRAPHY (2.2 ANGSTROMS) IN COMPLEX WITH GLUTATHIONE</scope>
    <scope>CATALYTIC ACTIVITY</scope>
    <scope>SUBUNIT</scope>
</reference>
<keyword id="KW-0002">3D-structure</keyword>
<keyword id="KW-0007">Acetylation</keyword>
<keyword id="KW-0963">Cytoplasm</keyword>
<keyword id="KW-0413">Isomerase</keyword>
<keyword id="KW-0443">Lipid metabolism</keyword>
<keyword id="KW-0560">Oxidoreductase</keyword>
<keyword id="KW-0575">Peroxidase</keyword>
<keyword id="KW-1185">Reference proteome</keyword>
<keyword id="KW-0808">Transferase</keyword>